<comment type="subunit">
    <text evidence="1">Part of a tripartite efflux system composed of MdtA, MdtB and MdtC. MdtB forms a heteromultimer with MdtC.</text>
</comment>
<comment type="subcellular location">
    <subcellularLocation>
        <location evidence="1">Cell inner membrane</location>
        <topology evidence="1">Multi-pass membrane protein</topology>
    </subcellularLocation>
</comment>
<comment type="similarity">
    <text evidence="1">Belongs to the resistance-nodulation-cell division (RND) (TC 2.A.6) family. MdtB subfamily.</text>
</comment>
<gene>
    <name evidence="1" type="primary">mdtB</name>
    <name type="ordered locus">Ent638_2685</name>
</gene>
<proteinExistence type="inferred from homology"/>
<name>MDTB_ENT38</name>
<reference key="1">
    <citation type="journal article" date="2010" name="PLoS Genet.">
        <title>Genome sequence of the plant growth promoting endophytic bacterium Enterobacter sp. 638.</title>
        <authorList>
            <person name="Taghavi S."/>
            <person name="van der Lelie D."/>
            <person name="Hoffman A."/>
            <person name="Zhang Y.B."/>
            <person name="Walla M.D."/>
            <person name="Vangronsveld J."/>
            <person name="Newman L."/>
            <person name="Monchy S."/>
        </authorList>
    </citation>
    <scope>NUCLEOTIDE SEQUENCE [LARGE SCALE GENOMIC DNA]</scope>
    <source>
        <strain>638</strain>
    </source>
</reference>
<dbReference type="EMBL" id="CP000653">
    <property type="protein sequence ID" value="ABP61351.1"/>
    <property type="molecule type" value="Genomic_DNA"/>
</dbReference>
<dbReference type="RefSeq" id="WP_015959684.1">
    <property type="nucleotide sequence ID" value="NC_009436.1"/>
</dbReference>
<dbReference type="SMR" id="A4WCC1"/>
<dbReference type="STRING" id="399742.Ent638_2685"/>
<dbReference type="KEGG" id="ent:Ent638_2685"/>
<dbReference type="eggNOG" id="COG0841">
    <property type="taxonomic scope" value="Bacteria"/>
</dbReference>
<dbReference type="HOGENOM" id="CLU_002755_1_2_6"/>
<dbReference type="OrthoDB" id="9757904at2"/>
<dbReference type="Proteomes" id="UP000000230">
    <property type="component" value="Chromosome"/>
</dbReference>
<dbReference type="GO" id="GO:0005886">
    <property type="term" value="C:plasma membrane"/>
    <property type="evidence" value="ECO:0007669"/>
    <property type="project" value="UniProtKB-SubCell"/>
</dbReference>
<dbReference type="GO" id="GO:0042910">
    <property type="term" value="F:xenobiotic transmembrane transporter activity"/>
    <property type="evidence" value="ECO:0007669"/>
    <property type="project" value="TreeGrafter"/>
</dbReference>
<dbReference type="FunFam" id="1.20.1640.10:FF:000001">
    <property type="entry name" value="Efflux pump membrane transporter"/>
    <property type="match status" value="1"/>
</dbReference>
<dbReference type="FunFam" id="3.30.70.1430:FF:000001">
    <property type="entry name" value="Efflux pump membrane transporter"/>
    <property type="match status" value="1"/>
</dbReference>
<dbReference type="Gene3D" id="3.30.70.1430">
    <property type="entry name" value="Multidrug efflux transporter AcrB pore domain"/>
    <property type="match status" value="2"/>
</dbReference>
<dbReference type="Gene3D" id="3.30.70.1440">
    <property type="entry name" value="Multidrug efflux transporter AcrB pore domain"/>
    <property type="match status" value="1"/>
</dbReference>
<dbReference type="Gene3D" id="3.30.70.1320">
    <property type="entry name" value="Multidrug efflux transporter AcrB pore domain like"/>
    <property type="match status" value="1"/>
</dbReference>
<dbReference type="Gene3D" id="3.30.2090.10">
    <property type="entry name" value="Multidrug efflux transporter AcrB TolC docking domain, DN and DC subdomains"/>
    <property type="match status" value="2"/>
</dbReference>
<dbReference type="Gene3D" id="1.20.1640.10">
    <property type="entry name" value="Multidrug efflux transporter AcrB transmembrane domain"/>
    <property type="match status" value="2"/>
</dbReference>
<dbReference type="HAMAP" id="MF_01423">
    <property type="entry name" value="MdtB"/>
    <property type="match status" value="1"/>
</dbReference>
<dbReference type="InterPro" id="IPR027463">
    <property type="entry name" value="AcrB_DN_DC_subdom"/>
</dbReference>
<dbReference type="InterPro" id="IPR001036">
    <property type="entry name" value="Acrflvin-R"/>
</dbReference>
<dbReference type="InterPro" id="IPR022831">
    <property type="entry name" value="Multidrug-R_MdtB"/>
</dbReference>
<dbReference type="NCBIfam" id="NF007798">
    <property type="entry name" value="PRK10503.1"/>
    <property type="match status" value="1"/>
</dbReference>
<dbReference type="NCBIfam" id="NF033617">
    <property type="entry name" value="RND_permease_2"/>
    <property type="match status" value="1"/>
</dbReference>
<dbReference type="PANTHER" id="PTHR32063">
    <property type="match status" value="1"/>
</dbReference>
<dbReference type="PANTHER" id="PTHR32063:SF21">
    <property type="entry name" value="MULTIDRUG RESISTANCE PROTEIN MDTB"/>
    <property type="match status" value="1"/>
</dbReference>
<dbReference type="Pfam" id="PF00873">
    <property type="entry name" value="ACR_tran"/>
    <property type="match status" value="1"/>
</dbReference>
<dbReference type="PRINTS" id="PR00702">
    <property type="entry name" value="ACRIFLAVINRP"/>
</dbReference>
<dbReference type="SUPFAM" id="SSF82693">
    <property type="entry name" value="Multidrug efflux transporter AcrB pore domain, PN1, PN2, PC1 and PC2 subdomains"/>
    <property type="match status" value="3"/>
</dbReference>
<dbReference type="SUPFAM" id="SSF82714">
    <property type="entry name" value="Multidrug efflux transporter AcrB TolC docking domain, DN and DC subdomains"/>
    <property type="match status" value="2"/>
</dbReference>
<dbReference type="SUPFAM" id="SSF82866">
    <property type="entry name" value="Multidrug efflux transporter AcrB transmembrane domain"/>
    <property type="match status" value="2"/>
</dbReference>
<feature type="chain" id="PRO_1000068504" description="Multidrug resistance protein MdtB">
    <location>
        <begin position="1"/>
        <end position="1040"/>
    </location>
</feature>
<feature type="transmembrane region" description="Helical" evidence="1">
    <location>
        <begin position="16"/>
        <end position="36"/>
    </location>
</feature>
<feature type="transmembrane region" description="Helical" evidence="1">
    <location>
        <begin position="342"/>
        <end position="362"/>
    </location>
</feature>
<feature type="transmembrane region" description="Helical" evidence="1">
    <location>
        <begin position="369"/>
        <end position="389"/>
    </location>
</feature>
<feature type="transmembrane region" description="Helical" evidence="1">
    <location>
        <begin position="396"/>
        <end position="416"/>
    </location>
</feature>
<feature type="transmembrane region" description="Helical" evidence="1">
    <location>
        <begin position="440"/>
        <end position="460"/>
    </location>
</feature>
<feature type="transmembrane region" description="Helical" evidence="1">
    <location>
        <begin position="472"/>
        <end position="492"/>
    </location>
</feature>
<feature type="transmembrane region" description="Helical" evidence="1">
    <location>
        <begin position="537"/>
        <end position="557"/>
    </location>
</feature>
<feature type="transmembrane region" description="Helical" evidence="1">
    <location>
        <begin position="869"/>
        <end position="889"/>
    </location>
</feature>
<feature type="transmembrane region" description="Helical" evidence="1">
    <location>
        <begin position="890"/>
        <end position="910"/>
    </location>
</feature>
<feature type="transmembrane region" description="Helical" evidence="1">
    <location>
        <begin position="911"/>
        <end position="931"/>
    </location>
</feature>
<feature type="transmembrane region" description="Helical" evidence="1">
    <location>
        <begin position="968"/>
        <end position="988"/>
    </location>
</feature>
<feature type="transmembrane region" description="Helical" evidence="1">
    <location>
        <begin position="998"/>
        <end position="1018"/>
    </location>
</feature>
<evidence type="ECO:0000255" key="1">
    <source>
        <dbReference type="HAMAP-Rule" id="MF_01423"/>
    </source>
</evidence>
<accession>A4WCC1</accession>
<organism>
    <name type="scientific">Enterobacter sp. (strain 638)</name>
    <dbReference type="NCBI Taxonomy" id="399742"/>
    <lineage>
        <taxon>Bacteria</taxon>
        <taxon>Pseudomonadati</taxon>
        <taxon>Pseudomonadota</taxon>
        <taxon>Gammaproteobacteria</taxon>
        <taxon>Enterobacterales</taxon>
        <taxon>Enterobacteriaceae</taxon>
        <taxon>Enterobacter</taxon>
    </lineage>
</organism>
<sequence>MQVLPPSSTGGPSRLFIMRPVATTLLMVAILIAGIIGYRFLPVSALPEVDYPTIQVITLYPGASPDVVTSAITAPLERQFGQMSGLKQMSSQSSGGASVVTLQFQLTLPLDVAEQEVQAAINAATNLLPSDLPNPPVYSKVNPADPPIMTLAVTSSAMPMTQVEDMVETRVAQKISQVSGVGLVTLSGGQRPAVRVKLNAQAIAALGLTSETIRTAIVSANVNSAKGSLDGPTRAVTLSANDQMQSADEYRQLIVAYQNGAPIRLGDVATVEQGAENRWLGAWANKEQAIVMNVQRQPGANIIDTADSIRAMLPQLIESLPKSVNVKVLSDRTTNIRASVSDTQFELMLAMALVVMIIYVFLRNVPATIIPAVAVPLSLVGTFAVMVFLDFSINNLTLMALTIATGFVVDDAIVVIENISRYIEKGEKPLAAALKGAGEIGFTIISLTFSLIAVLIPLLFMGDIVGRLFREFAVTLAVAILISAVVSLTLTPMMCARMLSAESLRKQNRFSRASERMFERIIAAYGRMLEKVLNHPWATLSVALGTLALSVMLWIVIPKGFFPIQDNGIIQGTLQAPQSVSFASMAQRQQAVSDVIMKDPAVESLTSFVGVDGTNPSLNSARLQINLKPLDDRDDRVNTVIERLQSAVAKVPGVELYLQPTQDLTIDTTVSRTQYQFTLQATSLEALSTWVPQLVTKLQELPQLSDVSSDWQDKGLAAYVNVNRDTASRLGISMADVDNALYNAFGQRLISTIYTQANQYRVVLEHNTEQTPGLTALDTVRLTSKNGGIVPLSAIATVEQRFAPLSINHLDQFPSTTISFNVPDNYSLGEAVESILNAEKTLNFPTDIQTQFQGSTLAFQAALGNTIWLIVAAVVAMYIVLGVLYESFIHPVTILSTLPTAGVGALLALMLSGSELDVIAIIGIILLIGIVKKNAIMMIDFALAAEREQGMAPRDAIFQACLLRFRPILMTTMAALLGALPLMLSTGVGAELRRPLGIGMVGGLLVSQVLTLFTTPVIYLLFDTLALKMKARFPKREEEA</sequence>
<protein>
    <recommendedName>
        <fullName evidence="1">Multidrug resistance protein MdtB</fullName>
    </recommendedName>
    <alternativeName>
        <fullName evidence="1">Multidrug transporter MdtB</fullName>
    </alternativeName>
</protein>
<keyword id="KW-0997">Cell inner membrane</keyword>
<keyword id="KW-1003">Cell membrane</keyword>
<keyword id="KW-0472">Membrane</keyword>
<keyword id="KW-0812">Transmembrane</keyword>
<keyword id="KW-1133">Transmembrane helix</keyword>
<keyword id="KW-0813">Transport</keyword>